<keyword id="KW-0963">Cytoplasm</keyword>
<keyword id="KW-0238">DNA-binding</keyword>
<keyword id="KW-0678">Repressor</keyword>
<keyword id="KW-0804">Transcription</keyword>
<keyword id="KW-0805">Transcription regulation</keyword>
<organism>
    <name type="scientific">Streptococcus thermophilus (strain ATCC BAA-491 / LMD-9)</name>
    <dbReference type="NCBI Taxonomy" id="322159"/>
    <lineage>
        <taxon>Bacteria</taxon>
        <taxon>Bacillati</taxon>
        <taxon>Bacillota</taxon>
        <taxon>Bacilli</taxon>
        <taxon>Lactobacillales</taxon>
        <taxon>Streptococcaceae</taxon>
        <taxon>Streptococcus</taxon>
    </lineage>
</organism>
<dbReference type="EMBL" id="CP000419">
    <property type="protein sequence ID" value="ABJ66747.1"/>
    <property type="molecule type" value="Genomic_DNA"/>
</dbReference>
<dbReference type="RefSeq" id="WP_002951720.1">
    <property type="nucleotide sequence ID" value="NC_008532.1"/>
</dbReference>
<dbReference type="SMR" id="Q03J75"/>
<dbReference type="GeneID" id="66899381"/>
<dbReference type="KEGG" id="ste:STER_1599"/>
<dbReference type="HOGENOM" id="CLU_089581_0_0_9"/>
<dbReference type="GO" id="GO:0005737">
    <property type="term" value="C:cytoplasm"/>
    <property type="evidence" value="ECO:0007669"/>
    <property type="project" value="UniProtKB-SubCell"/>
</dbReference>
<dbReference type="GO" id="GO:0003677">
    <property type="term" value="F:DNA binding"/>
    <property type="evidence" value="ECO:0007669"/>
    <property type="project" value="UniProtKB-UniRule"/>
</dbReference>
<dbReference type="GO" id="GO:0003700">
    <property type="term" value="F:DNA-binding transcription factor activity"/>
    <property type="evidence" value="ECO:0007669"/>
    <property type="project" value="InterPro"/>
</dbReference>
<dbReference type="GO" id="GO:0005525">
    <property type="term" value="F:GTP binding"/>
    <property type="evidence" value="ECO:0007669"/>
    <property type="project" value="InterPro"/>
</dbReference>
<dbReference type="GO" id="GO:0045892">
    <property type="term" value="P:negative regulation of DNA-templated transcription"/>
    <property type="evidence" value="ECO:0007669"/>
    <property type="project" value="UniProtKB-UniRule"/>
</dbReference>
<dbReference type="CDD" id="cd00090">
    <property type="entry name" value="HTH_ARSR"/>
    <property type="match status" value="1"/>
</dbReference>
<dbReference type="FunFam" id="1.10.10.10:FF:000034">
    <property type="entry name" value="GTP-sensing transcriptional pleiotropic repressor CodY"/>
    <property type="match status" value="1"/>
</dbReference>
<dbReference type="FunFam" id="3.30.450.40:FF:000003">
    <property type="entry name" value="GTP-sensing transcriptional pleiotropic repressor CodY"/>
    <property type="match status" value="1"/>
</dbReference>
<dbReference type="Gene3D" id="3.30.450.40">
    <property type="match status" value="1"/>
</dbReference>
<dbReference type="Gene3D" id="1.10.10.10">
    <property type="entry name" value="Winged helix-like DNA-binding domain superfamily/Winged helix DNA-binding domain"/>
    <property type="match status" value="1"/>
</dbReference>
<dbReference type="HAMAP" id="MF_00621">
    <property type="entry name" value="HTH_type_CodY"/>
    <property type="match status" value="1"/>
</dbReference>
<dbReference type="InterPro" id="IPR011991">
    <property type="entry name" value="ArsR-like_HTH"/>
</dbReference>
<dbReference type="InterPro" id="IPR014154">
    <property type="entry name" value="CodY"/>
</dbReference>
<dbReference type="InterPro" id="IPR029016">
    <property type="entry name" value="GAF-like_dom_sf"/>
</dbReference>
<dbReference type="InterPro" id="IPR013198">
    <property type="entry name" value="GTP_trans_reg_CodY_C"/>
</dbReference>
<dbReference type="InterPro" id="IPR010312">
    <property type="entry name" value="Transc_reg_CodY_N"/>
</dbReference>
<dbReference type="InterPro" id="IPR036388">
    <property type="entry name" value="WH-like_DNA-bd_sf"/>
</dbReference>
<dbReference type="InterPro" id="IPR036390">
    <property type="entry name" value="WH_DNA-bd_sf"/>
</dbReference>
<dbReference type="NCBIfam" id="TIGR02787">
    <property type="entry name" value="codY_Gpos"/>
    <property type="match status" value="1"/>
</dbReference>
<dbReference type="NCBIfam" id="NF003170">
    <property type="entry name" value="PRK04158.1"/>
    <property type="match status" value="1"/>
</dbReference>
<dbReference type="PANTHER" id="PTHR40062:SF1">
    <property type="entry name" value="GLOBAL TRANSCRIPTIONAL REGULATOR CODY"/>
    <property type="match status" value="1"/>
</dbReference>
<dbReference type="PANTHER" id="PTHR40062">
    <property type="entry name" value="GTP-SENSING TRANSCRIPTIONAL PLEIOTROPIC REPRESSOR CODY"/>
    <property type="match status" value="1"/>
</dbReference>
<dbReference type="Pfam" id="PF06018">
    <property type="entry name" value="CodY"/>
    <property type="match status" value="1"/>
</dbReference>
<dbReference type="Pfam" id="PF08222">
    <property type="entry name" value="HTH_CodY"/>
    <property type="match status" value="1"/>
</dbReference>
<dbReference type="PIRSF" id="PIRSF011572">
    <property type="entry name" value="GTP_sensing_CodY"/>
    <property type="match status" value="1"/>
</dbReference>
<dbReference type="SUPFAM" id="SSF46785">
    <property type="entry name" value="Winged helix' DNA-binding domain"/>
    <property type="match status" value="1"/>
</dbReference>
<accession>Q03J75</accession>
<protein>
    <recommendedName>
        <fullName evidence="1">Global transcriptional regulator CodY</fullName>
    </recommendedName>
</protein>
<proteinExistence type="inferred from homology"/>
<reference key="1">
    <citation type="journal article" date="2006" name="Proc. Natl. Acad. Sci. U.S.A.">
        <title>Comparative genomics of the lactic acid bacteria.</title>
        <authorList>
            <person name="Makarova K.S."/>
            <person name="Slesarev A."/>
            <person name="Wolf Y.I."/>
            <person name="Sorokin A."/>
            <person name="Mirkin B."/>
            <person name="Koonin E.V."/>
            <person name="Pavlov A."/>
            <person name="Pavlova N."/>
            <person name="Karamychev V."/>
            <person name="Polouchine N."/>
            <person name="Shakhova V."/>
            <person name="Grigoriev I."/>
            <person name="Lou Y."/>
            <person name="Rohksar D."/>
            <person name="Lucas S."/>
            <person name="Huang K."/>
            <person name="Goodstein D.M."/>
            <person name="Hawkins T."/>
            <person name="Plengvidhya V."/>
            <person name="Welker D."/>
            <person name="Hughes J."/>
            <person name="Goh Y."/>
            <person name="Benson A."/>
            <person name="Baldwin K."/>
            <person name="Lee J.-H."/>
            <person name="Diaz-Muniz I."/>
            <person name="Dosti B."/>
            <person name="Smeianov V."/>
            <person name="Wechter W."/>
            <person name="Barabote R."/>
            <person name="Lorca G."/>
            <person name="Altermann E."/>
            <person name="Barrangou R."/>
            <person name="Ganesan B."/>
            <person name="Xie Y."/>
            <person name="Rawsthorne H."/>
            <person name="Tamir D."/>
            <person name="Parker C."/>
            <person name="Breidt F."/>
            <person name="Broadbent J.R."/>
            <person name="Hutkins R."/>
            <person name="O'Sullivan D."/>
            <person name="Steele J."/>
            <person name="Unlu G."/>
            <person name="Saier M.H. Jr."/>
            <person name="Klaenhammer T."/>
            <person name="Richardson P."/>
            <person name="Kozyavkin S."/>
            <person name="Weimer B.C."/>
            <person name="Mills D.A."/>
        </authorList>
    </citation>
    <scope>NUCLEOTIDE SEQUENCE [LARGE SCALE GENOMIC DNA]</scope>
    <source>
        <strain>ATCC BAA-491 / LMD-9</strain>
    </source>
</reference>
<feature type="chain" id="PRO_1000051552" description="Global transcriptional regulator CodY">
    <location>
        <begin position="1"/>
        <end position="261"/>
    </location>
</feature>
<feature type="DNA-binding region" description="H-T-H motif" evidence="1">
    <location>
        <begin position="207"/>
        <end position="226"/>
    </location>
</feature>
<feature type="region of interest" description="GAF domain" evidence="1">
    <location>
        <begin position="1"/>
        <end position="159"/>
    </location>
</feature>
<sequence length="261" mass="28919">MANLLDKTRKITSILQRSVDSLEGDLPYNNMAAQLADIIDCNAAIVNGGGALLGFAMKYKTNNDRVEKFFKAKQLPEEYIRGISRVYDTQENIGIDSDLTIFPVELKDDFPDGLTTIAPIYGGGMRLGSFIIWRNDHDFVDDDLILVEIASTVVGLQLLHLQTENLEETIRKQTAINMAINTLSYSEIKAVSAILNELDGLEGRLTASVIADRIGITRSVIVNALRKLESAGIIESRSLGMKGTYLKVLNEGIYDKLKEYE</sequence>
<comment type="function">
    <text evidence="1">DNA-binding global transcriptional regulator which is involved in the adaptive response to starvation and acts by directly or indirectly controlling the expression of numerous genes in response to nutrient availability. During rapid exponential growth, CodY is highly active and represses genes whose products allow adaptation to nutrient depletion.</text>
</comment>
<comment type="subcellular location">
    <subcellularLocation>
        <location evidence="1">Cytoplasm</location>
    </subcellularLocation>
</comment>
<comment type="similarity">
    <text evidence="1">Belongs to the CodY family.</text>
</comment>
<gene>
    <name evidence="1" type="primary">codY</name>
    <name type="ordered locus">STER_1599</name>
</gene>
<name>CODY_STRTD</name>
<evidence type="ECO:0000255" key="1">
    <source>
        <dbReference type="HAMAP-Rule" id="MF_00621"/>
    </source>
</evidence>